<sequence>MDIIFYHPTFDTQWWIEALRKAIPQARVRAWKSGDNDSADYALVWHPPVEMLAGRDLKAVFALGAGVDSILSKLQAHPEMLNPSVPLFRLEDTGMGEQMQEYAVSQVLHWFRRFDDYRIQQNSSHWQPLPEYHREDFTIGILGAGVLGSKVAQSLQTWRFPLRCWSRTRKSWPGVQSFAGREELSAFLSQCRVLINLLPNTPETVGIINQQLLEKLPDGAYLLNLARGVHVVEDDLLAALDSGKVKGAMLDVFNREPLPPESPLWQHPRVTITPHVAAITRPAEAVEYISRTIAQLEKGERVCGQVDRARGY</sequence>
<gene>
    <name evidence="1" type="primary">ghrA</name>
    <name type="ordered locus">ECDH10B_1105</name>
</gene>
<evidence type="ECO:0000255" key="1">
    <source>
        <dbReference type="HAMAP-Rule" id="MF_01666"/>
    </source>
</evidence>
<accession>B1X9E7</accession>
<dbReference type="EC" id="1.1.1.79" evidence="1"/>
<dbReference type="EC" id="1.1.1.81" evidence="1"/>
<dbReference type="EMBL" id="CP000948">
    <property type="protein sequence ID" value="ACB02227.1"/>
    <property type="molecule type" value="Genomic_DNA"/>
</dbReference>
<dbReference type="RefSeq" id="WP_000351317.1">
    <property type="nucleotide sequence ID" value="NC_010473.1"/>
</dbReference>
<dbReference type="SMR" id="B1X9E7"/>
<dbReference type="GeneID" id="93776385"/>
<dbReference type="KEGG" id="ecd:ECDH10B_1105"/>
<dbReference type="HOGENOM" id="CLU_019796_1_0_6"/>
<dbReference type="GO" id="GO:0005829">
    <property type="term" value="C:cytosol"/>
    <property type="evidence" value="ECO:0007669"/>
    <property type="project" value="UniProtKB-ARBA"/>
</dbReference>
<dbReference type="GO" id="GO:0030267">
    <property type="term" value="F:glyoxylate reductase (NADPH) activity"/>
    <property type="evidence" value="ECO:0007669"/>
    <property type="project" value="UniProtKB-UniRule"/>
</dbReference>
<dbReference type="GO" id="GO:0008465">
    <property type="term" value="F:hydroxypyruvate reductase (NADH) activity"/>
    <property type="evidence" value="ECO:0007669"/>
    <property type="project" value="RHEA"/>
</dbReference>
<dbReference type="GO" id="GO:0120509">
    <property type="term" value="F:hydroxypyruvate reductase (NADPH) activity"/>
    <property type="evidence" value="ECO:0007669"/>
    <property type="project" value="RHEA"/>
</dbReference>
<dbReference type="GO" id="GO:0051287">
    <property type="term" value="F:NAD binding"/>
    <property type="evidence" value="ECO:0007669"/>
    <property type="project" value="InterPro"/>
</dbReference>
<dbReference type="CDD" id="cd12164">
    <property type="entry name" value="GDH_like_2"/>
    <property type="match status" value="1"/>
</dbReference>
<dbReference type="FunFam" id="3.40.50.720:FF:000110">
    <property type="entry name" value="Glyoxylate/hydroxypyruvate reductase A"/>
    <property type="match status" value="1"/>
</dbReference>
<dbReference type="Gene3D" id="3.40.50.720">
    <property type="entry name" value="NAD(P)-binding Rossmann-like Domain"/>
    <property type="match status" value="2"/>
</dbReference>
<dbReference type="HAMAP" id="MF_01666">
    <property type="entry name" value="2_Hacid_dh_C_GhrA"/>
    <property type="match status" value="1"/>
</dbReference>
<dbReference type="InterPro" id="IPR029753">
    <property type="entry name" value="D-isomer_DH_CS"/>
</dbReference>
<dbReference type="InterPro" id="IPR006140">
    <property type="entry name" value="D-isomer_DH_NAD-bd"/>
</dbReference>
<dbReference type="InterPro" id="IPR023514">
    <property type="entry name" value="GhrA_Enterobacterales"/>
</dbReference>
<dbReference type="InterPro" id="IPR036291">
    <property type="entry name" value="NAD(P)-bd_dom_sf"/>
</dbReference>
<dbReference type="NCBIfam" id="NF012013">
    <property type="entry name" value="PRK15469.1"/>
    <property type="match status" value="1"/>
</dbReference>
<dbReference type="PANTHER" id="PTHR43333">
    <property type="entry name" value="2-HACID_DH_C DOMAIN-CONTAINING PROTEIN"/>
    <property type="match status" value="1"/>
</dbReference>
<dbReference type="PANTHER" id="PTHR43333:SF1">
    <property type="entry name" value="D-ISOMER SPECIFIC 2-HYDROXYACID DEHYDROGENASE NAD-BINDING DOMAIN-CONTAINING PROTEIN"/>
    <property type="match status" value="1"/>
</dbReference>
<dbReference type="Pfam" id="PF02826">
    <property type="entry name" value="2-Hacid_dh_C"/>
    <property type="match status" value="1"/>
</dbReference>
<dbReference type="SUPFAM" id="SSF51735">
    <property type="entry name" value="NAD(P)-binding Rossmann-fold domains"/>
    <property type="match status" value="1"/>
</dbReference>
<dbReference type="PROSITE" id="PS00671">
    <property type="entry name" value="D_2_HYDROXYACID_DH_3"/>
    <property type="match status" value="1"/>
</dbReference>
<name>GHRA_ECODH</name>
<organism>
    <name type="scientific">Escherichia coli (strain K12 / DH10B)</name>
    <dbReference type="NCBI Taxonomy" id="316385"/>
    <lineage>
        <taxon>Bacteria</taxon>
        <taxon>Pseudomonadati</taxon>
        <taxon>Pseudomonadota</taxon>
        <taxon>Gammaproteobacteria</taxon>
        <taxon>Enterobacterales</taxon>
        <taxon>Enterobacteriaceae</taxon>
        <taxon>Escherichia</taxon>
    </lineage>
</organism>
<keyword id="KW-0963">Cytoplasm</keyword>
<keyword id="KW-0520">NAD</keyword>
<keyword id="KW-0521">NADP</keyword>
<keyword id="KW-0560">Oxidoreductase</keyword>
<proteinExistence type="inferred from homology"/>
<protein>
    <recommendedName>
        <fullName evidence="1">Glyoxylate/hydroxypyruvate reductase A</fullName>
        <ecNumber evidence="1">1.1.1.79</ecNumber>
        <ecNumber evidence="1">1.1.1.81</ecNumber>
    </recommendedName>
    <alternativeName>
        <fullName evidence="1">2-ketoacid reductase</fullName>
    </alternativeName>
</protein>
<feature type="chain" id="PRO_0000348355" description="Glyoxylate/hydroxypyruvate reductase A">
    <location>
        <begin position="1"/>
        <end position="312"/>
    </location>
</feature>
<feature type="active site" evidence="1">
    <location>
        <position position="227"/>
    </location>
</feature>
<feature type="active site" description="Proton donor" evidence="1">
    <location>
        <position position="275"/>
    </location>
</feature>
<comment type="function">
    <text evidence="1">Catalyzes the NADPH-dependent reduction of glyoxylate and hydroxypyruvate into glycolate and glycerate, respectively.</text>
</comment>
<comment type="catalytic activity">
    <reaction evidence="1">
        <text>glycolate + NADP(+) = glyoxylate + NADPH + H(+)</text>
        <dbReference type="Rhea" id="RHEA:10992"/>
        <dbReference type="ChEBI" id="CHEBI:15378"/>
        <dbReference type="ChEBI" id="CHEBI:29805"/>
        <dbReference type="ChEBI" id="CHEBI:36655"/>
        <dbReference type="ChEBI" id="CHEBI:57783"/>
        <dbReference type="ChEBI" id="CHEBI:58349"/>
        <dbReference type="EC" id="1.1.1.79"/>
    </reaction>
</comment>
<comment type="catalytic activity">
    <reaction evidence="1">
        <text>(R)-glycerate + NAD(+) = 3-hydroxypyruvate + NADH + H(+)</text>
        <dbReference type="Rhea" id="RHEA:17905"/>
        <dbReference type="ChEBI" id="CHEBI:15378"/>
        <dbReference type="ChEBI" id="CHEBI:16659"/>
        <dbReference type="ChEBI" id="CHEBI:17180"/>
        <dbReference type="ChEBI" id="CHEBI:57540"/>
        <dbReference type="ChEBI" id="CHEBI:57945"/>
        <dbReference type="EC" id="1.1.1.81"/>
    </reaction>
</comment>
<comment type="catalytic activity">
    <reaction evidence="1">
        <text>(R)-glycerate + NADP(+) = 3-hydroxypyruvate + NADPH + H(+)</text>
        <dbReference type="Rhea" id="RHEA:18657"/>
        <dbReference type="ChEBI" id="CHEBI:15378"/>
        <dbReference type="ChEBI" id="CHEBI:16659"/>
        <dbReference type="ChEBI" id="CHEBI:17180"/>
        <dbReference type="ChEBI" id="CHEBI:57783"/>
        <dbReference type="ChEBI" id="CHEBI:58349"/>
        <dbReference type="EC" id="1.1.1.81"/>
    </reaction>
</comment>
<comment type="subcellular location">
    <subcellularLocation>
        <location evidence="1">Cytoplasm</location>
    </subcellularLocation>
</comment>
<comment type="similarity">
    <text evidence="1">Belongs to the D-isomer specific 2-hydroxyacid dehydrogenase family. GhrA subfamily.</text>
</comment>
<reference key="1">
    <citation type="journal article" date="2008" name="J. Bacteriol.">
        <title>The complete genome sequence of Escherichia coli DH10B: insights into the biology of a laboratory workhorse.</title>
        <authorList>
            <person name="Durfee T."/>
            <person name="Nelson R."/>
            <person name="Baldwin S."/>
            <person name="Plunkett G. III"/>
            <person name="Burland V."/>
            <person name="Mau B."/>
            <person name="Petrosino J.F."/>
            <person name="Qin X."/>
            <person name="Muzny D.M."/>
            <person name="Ayele M."/>
            <person name="Gibbs R.A."/>
            <person name="Csorgo B."/>
            <person name="Posfai G."/>
            <person name="Weinstock G.M."/>
            <person name="Blattner F.R."/>
        </authorList>
    </citation>
    <scope>NUCLEOTIDE SEQUENCE [LARGE SCALE GENOMIC DNA]</scope>
    <source>
        <strain>K12 / DH10B</strain>
    </source>
</reference>